<gene>
    <name evidence="1" type="primary">uvrC</name>
    <name type="ordered locus">Achl_1823</name>
</gene>
<organism>
    <name type="scientific">Pseudarthrobacter chlorophenolicus (strain ATCC 700700 / DSM 12829 / CIP 107037 / JCM 12360 / KCTC 9906 / NCIMB 13794 / A6)</name>
    <name type="common">Arthrobacter chlorophenolicus</name>
    <dbReference type="NCBI Taxonomy" id="452863"/>
    <lineage>
        <taxon>Bacteria</taxon>
        <taxon>Bacillati</taxon>
        <taxon>Actinomycetota</taxon>
        <taxon>Actinomycetes</taxon>
        <taxon>Micrococcales</taxon>
        <taxon>Micrococcaceae</taxon>
        <taxon>Pseudarthrobacter</taxon>
    </lineage>
</organism>
<keyword id="KW-0963">Cytoplasm</keyword>
<keyword id="KW-0227">DNA damage</keyword>
<keyword id="KW-0228">DNA excision</keyword>
<keyword id="KW-0234">DNA repair</keyword>
<keyword id="KW-0267">Excision nuclease</keyword>
<keyword id="KW-0742">SOS response</keyword>
<comment type="function">
    <text evidence="1">The UvrABC repair system catalyzes the recognition and processing of DNA lesions. UvrC both incises the 5' and 3' sides of the lesion. The N-terminal half is responsible for the 3' incision and the C-terminal half is responsible for the 5' incision.</text>
</comment>
<comment type="subunit">
    <text evidence="1">Interacts with UvrB in an incision complex.</text>
</comment>
<comment type="subcellular location">
    <subcellularLocation>
        <location evidence="1">Cytoplasm</location>
    </subcellularLocation>
</comment>
<comment type="similarity">
    <text evidence="1">Belongs to the UvrC family.</text>
</comment>
<accession>B8H7L9</accession>
<name>UVRC_PSECP</name>
<protein>
    <recommendedName>
        <fullName evidence="1">UvrABC system protein C</fullName>
        <shortName evidence="1">Protein UvrC</shortName>
    </recommendedName>
    <alternativeName>
        <fullName evidence="1">Excinuclease ABC subunit C</fullName>
    </alternativeName>
</protein>
<sequence>MANPASYRPRTGEIPTNPGVYRFRDPHGRVIYVGKAKSLRSRLNSYFANPAGLLPKTYAMVHAASSVEWTVVGSELESLQLEYTWIKEFKPRFNVVFRDDKTYPYLAVTLGEKYPRVQVMRGDKRKGTRYFGPYTAGAIRETMDTLLRVFPVRSCSAGVFKRAESSGRPCLLGYIDKCSAPCVGRISPEDHRALAEDFCAFMGGEAKRFTNKLEKQMAAAVARLDYEQAARIRDDITALRKVFERNAVVLAEDTDADVFALHEDELEAAVQVFHVRGGRIRGQRGWVVEKVEDFTTPDLVEHLLQQVYGEDGETHGRLPREVLVPVAPSNAEELTEWLSGIRGARVDVRVPQRGDKAALMSTVRENAEHALKLHKTRRAGDLTVRSQALQELQEALDLPVPLLRIECFDVSHVQGTNVVASMVVVEDGLPKKSDYRKFSITGPAASDDTAAMHDVLTRRFRHYLQDKSAQVDEDVLEAGTAEAAAEAAADAAAEAAVADTTTPIPKTKFAYPPNLVVVDGGQPQVNAAARALADLGIDDVYVVGLAKRLEEVWLPDSDFPVILPRTSQGLYLLQRIRDEAHRFAISFHRQKRGKAMTVSALDGVPGLGASKRKALLAHFGSVKGVKAATPEELAQAKGIGPALAAAIVSHFTGGGPAAVTVPAINMTTGEIIET</sequence>
<dbReference type="EMBL" id="CP001341">
    <property type="protein sequence ID" value="ACL39799.1"/>
    <property type="molecule type" value="Genomic_DNA"/>
</dbReference>
<dbReference type="RefSeq" id="WP_015937019.1">
    <property type="nucleotide sequence ID" value="NC_011886.1"/>
</dbReference>
<dbReference type="SMR" id="B8H7L9"/>
<dbReference type="STRING" id="452863.Achl_1823"/>
<dbReference type="KEGG" id="ach:Achl_1823"/>
<dbReference type="eggNOG" id="COG0322">
    <property type="taxonomic scope" value="Bacteria"/>
</dbReference>
<dbReference type="HOGENOM" id="CLU_014841_1_1_11"/>
<dbReference type="OrthoDB" id="9804933at2"/>
<dbReference type="Proteomes" id="UP000002505">
    <property type="component" value="Chromosome"/>
</dbReference>
<dbReference type="GO" id="GO:0005737">
    <property type="term" value="C:cytoplasm"/>
    <property type="evidence" value="ECO:0007669"/>
    <property type="project" value="UniProtKB-SubCell"/>
</dbReference>
<dbReference type="GO" id="GO:0009380">
    <property type="term" value="C:excinuclease repair complex"/>
    <property type="evidence" value="ECO:0007669"/>
    <property type="project" value="InterPro"/>
</dbReference>
<dbReference type="GO" id="GO:0003677">
    <property type="term" value="F:DNA binding"/>
    <property type="evidence" value="ECO:0007669"/>
    <property type="project" value="UniProtKB-UniRule"/>
</dbReference>
<dbReference type="GO" id="GO:0009381">
    <property type="term" value="F:excinuclease ABC activity"/>
    <property type="evidence" value="ECO:0007669"/>
    <property type="project" value="UniProtKB-UniRule"/>
</dbReference>
<dbReference type="GO" id="GO:0006289">
    <property type="term" value="P:nucleotide-excision repair"/>
    <property type="evidence" value="ECO:0007669"/>
    <property type="project" value="UniProtKB-UniRule"/>
</dbReference>
<dbReference type="GO" id="GO:0009432">
    <property type="term" value="P:SOS response"/>
    <property type="evidence" value="ECO:0007669"/>
    <property type="project" value="UniProtKB-UniRule"/>
</dbReference>
<dbReference type="CDD" id="cd10434">
    <property type="entry name" value="GIY-YIG_UvrC_Cho"/>
    <property type="match status" value="1"/>
</dbReference>
<dbReference type="FunFam" id="3.40.1440.10:FF:000001">
    <property type="entry name" value="UvrABC system protein C"/>
    <property type="match status" value="1"/>
</dbReference>
<dbReference type="Gene3D" id="1.10.150.20">
    <property type="entry name" value="5' to 3' exonuclease, C-terminal subdomain"/>
    <property type="match status" value="1"/>
</dbReference>
<dbReference type="Gene3D" id="3.40.1440.10">
    <property type="entry name" value="GIY-YIG endonuclease"/>
    <property type="match status" value="1"/>
</dbReference>
<dbReference type="Gene3D" id="4.10.860.10">
    <property type="entry name" value="UVR domain"/>
    <property type="match status" value="1"/>
</dbReference>
<dbReference type="Gene3D" id="3.30.420.340">
    <property type="entry name" value="UvrC, RNAse H endonuclease domain"/>
    <property type="match status" value="1"/>
</dbReference>
<dbReference type="HAMAP" id="MF_00203">
    <property type="entry name" value="UvrC"/>
    <property type="match status" value="1"/>
</dbReference>
<dbReference type="InterPro" id="IPR000305">
    <property type="entry name" value="GIY-YIG_endonuc"/>
</dbReference>
<dbReference type="InterPro" id="IPR035901">
    <property type="entry name" value="GIY-YIG_endonuc_sf"/>
</dbReference>
<dbReference type="InterPro" id="IPR047296">
    <property type="entry name" value="GIY-YIG_UvrC_Cho"/>
</dbReference>
<dbReference type="InterPro" id="IPR003583">
    <property type="entry name" value="Hlx-hairpin-Hlx_DNA-bd_motif"/>
</dbReference>
<dbReference type="InterPro" id="IPR010994">
    <property type="entry name" value="RuvA_2-like"/>
</dbReference>
<dbReference type="InterPro" id="IPR001943">
    <property type="entry name" value="UVR_dom"/>
</dbReference>
<dbReference type="InterPro" id="IPR036876">
    <property type="entry name" value="UVR_dom_sf"/>
</dbReference>
<dbReference type="InterPro" id="IPR050066">
    <property type="entry name" value="UvrABC_protein_C"/>
</dbReference>
<dbReference type="InterPro" id="IPR004791">
    <property type="entry name" value="UvrC"/>
</dbReference>
<dbReference type="InterPro" id="IPR001162">
    <property type="entry name" value="UvrC_RNase_H_dom"/>
</dbReference>
<dbReference type="InterPro" id="IPR038476">
    <property type="entry name" value="UvrC_RNase_H_dom_sf"/>
</dbReference>
<dbReference type="NCBIfam" id="NF001824">
    <property type="entry name" value="PRK00558.1-5"/>
    <property type="match status" value="1"/>
</dbReference>
<dbReference type="NCBIfam" id="TIGR00194">
    <property type="entry name" value="uvrC"/>
    <property type="match status" value="1"/>
</dbReference>
<dbReference type="PANTHER" id="PTHR30562:SF1">
    <property type="entry name" value="UVRABC SYSTEM PROTEIN C"/>
    <property type="match status" value="1"/>
</dbReference>
<dbReference type="PANTHER" id="PTHR30562">
    <property type="entry name" value="UVRC/OXIDOREDUCTASE"/>
    <property type="match status" value="1"/>
</dbReference>
<dbReference type="Pfam" id="PF01541">
    <property type="entry name" value="GIY-YIG"/>
    <property type="match status" value="1"/>
</dbReference>
<dbReference type="Pfam" id="PF14520">
    <property type="entry name" value="HHH_5"/>
    <property type="match status" value="1"/>
</dbReference>
<dbReference type="Pfam" id="PF02151">
    <property type="entry name" value="UVR"/>
    <property type="match status" value="1"/>
</dbReference>
<dbReference type="Pfam" id="PF22920">
    <property type="entry name" value="UvrC_RNaseH"/>
    <property type="match status" value="1"/>
</dbReference>
<dbReference type="Pfam" id="PF08459">
    <property type="entry name" value="UvrC_RNaseH_dom"/>
    <property type="match status" value="1"/>
</dbReference>
<dbReference type="SMART" id="SM00465">
    <property type="entry name" value="GIYc"/>
    <property type="match status" value="1"/>
</dbReference>
<dbReference type="SMART" id="SM00278">
    <property type="entry name" value="HhH1"/>
    <property type="match status" value="2"/>
</dbReference>
<dbReference type="SUPFAM" id="SSF46600">
    <property type="entry name" value="C-terminal UvrC-binding domain of UvrB"/>
    <property type="match status" value="1"/>
</dbReference>
<dbReference type="SUPFAM" id="SSF82771">
    <property type="entry name" value="GIY-YIG endonuclease"/>
    <property type="match status" value="1"/>
</dbReference>
<dbReference type="SUPFAM" id="SSF47781">
    <property type="entry name" value="RuvA domain 2-like"/>
    <property type="match status" value="1"/>
</dbReference>
<dbReference type="PROSITE" id="PS50164">
    <property type="entry name" value="GIY_YIG"/>
    <property type="match status" value="1"/>
</dbReference>
<dbReference type="PROSITE" id="PS50151">
    <property type="entry name" value="UVR"/>
    <property type="match status" value="1"/>
</dbReference>
<dbReference type="PROSITE" id="PS50165">
    <property type="entry name" value="UVRC"/>
    <property type="match status" value="1"/>
</dbReference>
<proteinExistence type="inferred from homology"/>
<feature type="chain" id="PRO_1000200564" description="UvrABC system protein C">
    <location>
        <begin position="1"/>
        <end position="674"/>
    </location>
</feature>
<feature type="domain" description="GIY-YIG" evidence="1">
    <location>
        <begin position="16"/>
        <end position="95"/>
    </location>
</feature>
<feature type="domain" description="UVR" evidence="1">
    <location>
        <begin position="207"/>
        <end position="242"/>
    </location>
</feature>
<evidence type="ECO:0000255" key="1">
    <source>
        <dbReference type="HAMAP-Rule" id="MF_00203"/>
    </source>
</evidence>
<reference key="1">
    <citation type="submission" date="2009-01" db="EMBL/GenBank/DDBJ databases">
        <title>Complete sequence of chromosome of Arthrobacter chlorophenolicus A6.</title>
        <authorList>
            <consortium name="US DOE Joint Genome Institute"/>
            <person name="Lucas S."/>
            <person name="Copeland A."/>
            <person name="Lapidus A."/>
            <person name="Glavina del Rio T."/>
            <person name="Tice H."/>
            <person name="Bruce D."/>
            <person name="Goodwin L."/>
            <person name="Pitluck S."/>
            <person name="Goltsman E."/>
            <person name="Clum A."/>
            <person name="Larimer F."/>
            <person name="Land M."/>
            <person name="Hauser L."/>
            <person name="Kyrpides N."/>
            <person name="Mikhailova N."/>
            <person name="Jansson J."/>
            <person name="Richardson P."/>
        </authorList>
    </citation>
    <scope>NUCLEOTIDE SEQUENCE [LARGE SCALE GENOMIC DNA]</scope>
    <source>
        <strain>ATCC 700700 / DSM 12829 / CIP 107037 / JCM 12360 / KCTC 9906 / NCIMB 13794 / A6</strain>
    </source>
</reference>